<name>RLMN_ECOBW</name>
<feature type="chain" id="PRO_1000216117" description="Dual-specificity RNA methyltransferase RlmN">
    <location>
        <begin position="1"/>
        <end position="384"/>
    </location>
</feature>
<feature type="domain" description="Radical SAM core" evidence="2">
    <location>
        <begin position="111"/>
        <end position="350"/>
    </location>
</feature>
<feature type="active site" description="Proton acceptor" evidence="1">
    <location>
        <position position="105"/>
    </location>
</feature>
<feature type="active site" description="S-methylcysteine intermediate" evidence="1">
    <location>
        <position position="355"/>
    </location>
</feature>
<feature type="binding site" evidence="1">
    <location>
        <position position="125"/>
    </location>
    <ligand>
        <name>[4Fe-4S] cluster</name>
        <dbReference type="ChEBI" id="CHEBI:49883"/>
        <note>4Fe-4S-S-AdoMet</note>
    </ligand>
</feature>
<feature type="binding site" evidence="1">
    <location>
        <position position="129"/>
    </location>
    <ligand>
        <name>[4Fe-4S] cluster</name>
        <dbReference type="ChEBI" id="CHEBI:49883"/>
        <note>4Fe-4S-S-AdoMet</note>
    </ligand>
</feature>
<feature type="binding site" evidence="1">
    <location>
        <position position="132"/>
    </location>
    <ligand>
        <name>[4Fe-4S] cluster</name>
        <dbReference type="ChEBI" id="CHEBI:49883"/>
        <note>4Fe-4S-S-AdoMet</note>
    </ligand>
</feature>
<feature type="binding site" evidence="1">
    <location>
        <begin position="179"/>
        <end position="180"/>
    </location>
    <ligand>
        <name>S-adenosyl-L-methionine</name>
        <dbReference type="ChEBI" id="CHEBI:59789"/>
    </ligand>
</feature>
<feature type="binding site" evidence="1">
    <location>
        <position position="211"/>
    </location>
    <ligand>
        <name>S-adenosyl-L-methionine</name>
        <dbReference type="ChEBI" id="CHEBI:59789"/>
    </ligand>
</feature>
<feature type="binding site" evidence="1">
    <location>
        <begin position="233"/>
        <end position="235"/>
    </location>
    <ligand>
        <name>S-adenosyl-L-methionine</name>
        <dbReference type="ChEBI" id="CHEBI:59789"/>
    </ligand>
</feature>
<feature type="binding site" evidence="1">
    <location>
        <position position="312"/>
    </location>
    <ligand>
        <name>S-adenosyl-L-methionine</name>
        <dbReference type="ChEBI" id="CHEBI:59789"/>
    </ligand>
</feature>
<feature type="disulfide bond" description="(transient)" evidence="1">
    <location>
        <begin position="118"/>
        <end position="355"/>
    </location>
</feature>
<sequence length="384" mass="43086">MSEQLVTPENVTTKDGKINLLDLNRQQMREFFKDLGEKPFRADQVMKWMYHYCCDNFDEMTDINKVLRGKLKEVAEIRAPEVVEEQRSSDGTIKWAIAVGDQRVETVYIPEDDRATLCVSSQVGCALECKFCSTAQQGFNRNLRVSEIIGQVWRAAKIVGAAKVTGQRPITNVVMMGMGEPLLNLNNVVPAMEIMLDDFGFGLSKRRVTLSTSGVVPALDKLGDMIDVALAISLHAPNDEIRDEIVPINKKYNIETFLAAVRRYLEKSNANQGRVTIEYVMLDHVNDGTEHAHQLAELLKDTPCKINLIPWNPFPGAPYGRSSNSRIDRFSKVLMSYGFTTIVRKTRGDDIDAACGQLAGDVIDRTKRTLRKRMQGEAIDIKAV</sequence>
<evidence type="ECO:0000255" key="1">
    <source>
        <dbReference type="HAMAP-Rule" id="MF_01849"/>
    </source>
</evidence>
<evidence type="ECO:0000255" key="2">
    <source>
        <dbReference type="PROSITE-ProRule" id="PRU01266"/>
    </source>
</evidence>
<comment type="function">
    <text evidence="1">Specifically methylates position 2 of adenine 2503 in 23S rRNA and position 2 of adenine 37 in tRNAs. m2A2503 modification seems to play a crucial role in the proofreading step occurring at the peptidyl transferase center and thus would serve to optimize ribosomal fidelity.</text>
</comment>
<comment type="catalytic activity">
    <reaction evidence="1">
        <text>adenosine(2503) in 23S rRNA + 2 reduced [2Fe-2S]-[ferredoxin] + 2 S-adenosyl-L-methionine = 2-methyladenosine(2503) in 23S rRNA + 5'-deoxyadenosine + L-methionine + 2 oxidized [2Fe-2S]-[ferredoxin] + S-adenosyl-L-homocysteine</text>
        <dbReference type="Rhea" id="RHEA:42916"/>
        <dbReference type="Rhea" id="RHEA-COMP:10000"/>
        <dbReference type="Rhea" id="RHEA-COMP:10001"/>
        <dbReference type="Rhea" id="RHEA-COMP:10152"/>
        <dbReference type="Rhea" id="RHEA-COMP:10282"/>
        <dbReference type="ChEBI" id="CHEBI:17319"/>
        <dbReference type="ChEBI" id="CHEBI:33737"/>
        <dbReference type="ChEBI" id="CHEBI:33738"/>
        <dbReference type="ChEBI" id="CHEBI:57844"/>
        <dbReference type="ChEBI" id="CHEBI:57856"/>
        <dbReference type="ChEBI" id="CHEBI:59789"/>
        <dbReference type="ChEBI" id="CHEBI:74411"/>
        <dbReference type="ChEBI" id="CHEBI:74497"/>
        <dbReference type="EC" id="2.1.1.192"/>
    </reaction>
</comment>
<comment type="catalytic activity">
    <reaction evidence="1">
        <text>adenosine(37) in tRNA + 2 reduced [2Fe-2S]-[ferredoxin] + 2 S-adenosyl-L-methionine = 2-methyladenosine(37) in tRNA + 5'-deoxyadenosine + L-methionine + 2 oxidized [2Fe-2S]-[ferredoxin] + S-adenosyl-L-homocysteine</text>
        <dbReference type="Rhea" id="RHEA:43332"/>
        <dbReference type="Rhea" id="RHEA-COMP:10000"/>
        <dbReference type="Rhea" id="RHEA-COMP:10001"/>
        <dbReference type="Rhea" id="RHEA-COMP:10162"/>
        <dbReference type="Rhea" id="RHEA-COMP:10485"/>
        <dbReference type="ChEBI" id="CHEBI:17319"/>
        <dbReference type="ChEBI" id="CHEBI:33737"/>
        <dbReference type="ChEBI" id="CHEBI:33738"/>
        <dbReference type="ChEBI" id="CHEBI:57844"/>
        <dbReference type="ChEBI" id="CHEBI:57856"/>
        <dbReference type="ChEBI" id="CHEBI:59789"/>
        <dbReference type="ChEBI" id="CHEBI:74411"/>
        <dbReference type="ChEBI" id="CHEBI:74497"/>
        <dbReference type="EC" id="2.1.1.192"/>
    </reaction>
</comment>
<comment type="cofactor">
    <cofactor evidence="1">
        <name>[4Fe-4S] cluster</name>
        <dbReference type="ChEBI" id="CHEBI:49883"/>
    </cofactor>
    <text evidence="1">Binds 1 [4Fe-4S] cluster. The cluster is coordinated with 3 cysteines and an exchangeable S-adenosyl-L-methionine.</text>
</comment>
<comment type="subcellular location">
    <subcellularLocation>
        <location evidence="1">Cytoplasm</location>
    </subcellularLocation>
</comment>
<comment type="miscellaneous">
    <text evidence="1">Reaction proceeds by a ping-pong mechanism involving intermediate methylation of a conserved cysteine residue.</text>
</comment>
<comment type="similarity">
    <text evidence="1">Belongs to the radical SAM superfamily. RlmN family.</text>
</comment>
<reference key="1">
    <citation type="journal article" date="2009" name="J. Bacteriol.">
        <title>Genomic sequencing reveals regulatory mutations and recombinational events in the widely used MC4100 lineage of Escherichia coli K-12.</title>
        <authorList>
            <person name="Ferenci T."/>
            <person name="Zhou Z."/>
            <person name="Betteridge T."/>
            <person name="Ren Y."/>
            <person name="Liu Y."/>
            <person name="Feng L."/>
            <person name="Reeves P.R."/>
            <person name="Wang L."/>
        </authorList>
    </citation>
    <scope>NUCLEOTIDE SEQUENCE [LARGE SCALE GENOMIC DNA]</scope>
    <source>
        <strain>K12 / MC4100 / BW2952</strain>
    </source>
</reference>
<accession>C4ZX92</accession>
<organism>
    <name type="scientific">Escherichia coli (strain K12 / MC4100 / BW2952)</name>
    <dbReference type="NCBI Taxonomy" id="595496"/>
    <lineage>
        <taxon>Bacteria</taxon>
        <taxon>Pseudomonadati</taxon>
        <taxon>Pseudomonadota</taxon>
        <taxon>Gammaproteobacteria</taxon>
        <taxon>Enterobacterales</taxon>
        <taxon>Enterobacteriaceae</taxon>
        <taxon>Escherichia</taxon>
    </lineage>
</organism>
<keyword id="KW-0004">4Fe-4S</keyword>
<keyword id="KW-0963">Cytoplasm</keyword>
<keyword id="KW-1015">Disulfide bond</keyword>
<keyword id="KW-0408">Iron</keyword>
<keyword id="KW-0411">Iron-sulfur</keyword>
<keyword id="KW-0479">Metal-binding</keyword>
<keyword id="KW-0489">Methyltransferase</keyword>
<keyword id="KW-0698">rRNA processing</keyword>
<keyword id="KW-0949">S-adenosyl-L-methionine</keyword>
<keyword id="KW-0808">Transferase</keyword>
<keyword id="KW-0819">tRNA processing</keyword>
<gene>
    <name evidence="1" type="primary">rlmN</name>
    <name type="ordered locus">BWG_2281</name>
</gene>
<protein>
    <recommendedName>
        <fullName evidence="1">Dual-specificity RNA methyltransferase RlmN</fullName>
        <ecNumber evidence="1">2.1.1.192</ecNumber>
    </recommendedName>
    <alternativeName>
        <fullName evidence="1">23S rRNA (adenine(2503)-C(2))-methyltransferase</fullName>
    </alternativeName>
    <alternativeName>
        <fullName evidence="1">23S rRNA m2A2503 methyltransferase</fullName>
    </alternativeName>
    <alternativeName>
        <fullName evidence="1">Ribosomal RNA large subunit methyltransferase N</fullName>
    </alternativeName>
    <alternativeName>
        <fullName evidence="1">tRNA (adenine(37)-C(2))-methyltransferase</fullName>
    </alternativeName>
    <alternativeName>
        <fullName evidence="1">tRNA m2A37 methyltransferase</fullName>
    </alternativeName>
</protein>
<proteinExistence type="inferred from homology"/>
<dbReference type="EC" id="2.1.1.192" evidence="1"/>
<dbReference type="EMBL" id="CP001396">
    <property type="protein sequence ID" value="ACR64350.1"/>
    <property type="molecule type" value="Genomic_DNA"/>
</dbReference>
<dbReference type="RefSeq" id="WP_000003317.1">
    <property type="nucleotide sequence ID" value="NC_012759.1"/>
</dbReference>
<dbReference type="SMR" id="C4ZX92"/>
<dbReference type="KEGG" id="ebw:BWG_2281"/>
<dbReference type="HOGENOM" id="CLU_029101_0_0_6"/>
<dbReference type="GO" id="GO:0005737">
    <property type="term" value="C:cytoplasm"/>
    <property type="evidence" value="ECO:0007669"/>
    <property type="project" value="UniProtKB-SubCell"/>
</dbReference>
<dbReference type="GO" id="GO:0051539">
    <property type="term" value="F:4 iron, 4 sulfur cluster binding"/>
    <property type="evidence" value="ECO:0007669"/>
    <property type="project" value="UniProtKB-UniRule"/>
</dbReference>
<dbReference type="GO" id="GO:0046872">
    <property type="term" value="F:metal ion binding"/>
    <property type="evidence" value="ECO:0007669"/>
    <property type="project" value="UniProtKB-KW"/>
</dbReference>
<dbReference type="GO" id="GO:0070040">
    <property type="term" value="F:rRNA (adenine(2503)-C2-)-methyltransferase activity"/>
    <property type="evidence" value="ECO:0007669"/>
    <property type="project" value="UniProtKB-UniRule"/>
</dbReference>
<dbReference type="GO" id="GO:0019843">
    <property type="term" value="F:rRNA binding"/>
    <property type="evidence" value="ECO:0007669"/>
    <property type="project" value="UniProtKB-UniRule"/>
</dbReference>
<dbReference type="GO" id="GO:0002935">
    <property type="term" value="F:tRNA (adenine(37)-C2)-methyltransferase activity"/>
    <property type="evidence" value="ECO:0007669"/>
    <property type="project" value="UniProtKB-UniRule"/>
</dbReference>
<dbReference type="GO" id="GO:0000049">
    <property type="term" value="F:tRNA binding"/>
    <property type="evidence" value="ECO:0007669"/>
    <property type="project" value="UniProtKB-UniRule"/>
</dbReference>
<dbReference type="GO" id="GO:0070475">
    <property type="term" value="P:rRNA base methylation"/>
    <property type="evidence" value="ECO:0007669"/>
    <property type="project" value="UniProtKB-UniRule"/>
</dbReference>
<dbReference type="GO" id="GO:0030488">
    <property type="term" value="P:tRNA methylation"/>
    <property type="evidence" value="ECO:0007669"/>
    <property type="project" value="UniProtKB-UniRule"/>
</dbReference>
<dbReference type="CDD" id="cd01335">
    <property type="entry name" value="Radical_SAM"/>
    <property type="match status" value="1"/>
</dbReference>
<dbReference type="FunFam" id="1.10.150.530:FF:000001">
    <property type="entry name" value="Dual-specificity RNA methyltransferase RlmN"/>
    <property type="match status" value="1"/>
</dbReference>
<dbReference type="FunFam" id="3.20.20.70:FF:000008">
    <property type="entry name" value="Dual-specificity RNA methyltransferase RlmN"/>
    <property type="match status" value="1"/>
</dbReference>
<dbReference type="Gene3D" id="1.10.150.530">
    <property type="match status" value="1"/>
</dbReference>
<dbReference type="Gene3D" id="3.20.20.70">
    <property type="entry name" value="Aldolase class I"/>
    <property type="match status" value="1"/>
</dbReference>
<dbReference type="HAMAP" id="MF_01849">
    <property type="entry name" value="RNA_methyltr_RlmN"/>
    <property type="match status" value="1"/>
</dbReference>
<dbReference type="InterPro" id="IPR013785">
    <property type="entry name" value="Aldolase_TIM"/>
</dbReference>
<dbReference type="InterPro" id="IPR040072">
    <property type="entry name" value="Methyltransferase_A"/>
</dbReference>
<dbReference type="InterPro" id="IPR048641">
    <property type="entry name" value="RlmN_N"/>
</dbReference>
<dbReference type="InterPro" id="IPR027492">
    <property type="entry name" value="RNA_MTrfase_RlmN"/>
</dbReference>
<dbReference type="InterPro" id="IPR004383">
    <property type="entry name" value="rRNA_lsu_MTrfase_RlmN/Cfr"/>
</dbReference>
<dbReference type="InterPro" id="IPR007197">
    <property type="entry name" value="rSAM"/>
</dbReference>
<dbReference type="NCBIfam" id="NF008396">
    <property type="entry name" value="PRK11194.1"/>
    <property type="match status" value="1"/>
</dbReference>
<dbReference type="NCBIfam" id="TIGR00048">
    <property type="entry name" value="rRNA_mod_RlmN"/>
    <property type="match status" value="1"/>
</dbReference>
<dbReference type="PANTHER" id="PTHR30544">
    <property type="entry name" value="23S RRNA METHYLTRANSFERASE"/>
    <property type="match status" value="1"/>
</dbReference>
<dbReference type="PANTHER" id="PTHR30544:SF5">
    <property type="entry name" value="RADICAL SAM CORE DOMAIN-CONTAINING PROTEIN"/>
    <property type="match status" value="1"/>
</dbReference>
<dbReference type="Pfam" id="PF04055">
    <property type="entry name" value="Radical_SAM"/>
    <property type="match status" value="1"/>
</dbReference>
<dbReference type="Pfam" id="PF21016">
    <property type="entry name" value="RlmN_N"/>
    <property type="match status" value="1"/>
</dbReference>
<dbReference type="PIRSF" id="PIRSF006004">
    <property type="entry name" value="CHP00048"/>
    <property type="match status" value="1"/>
</dbReference>
<dbReference type="SFLD" id="SFLDF00275">
    <property type="entry name" value="adenosine_C2_methyltransferase"/>
    <property type="match status" value="1"/>
</dbReference>
<dbReference type="SFLD" id="SFLDG01062">
    <property type="entry name" value="methyltransferase_(Class_A)"/>
    <property type="match status" value="1"/>
</dbReference>
<dbReference type="SUPFAM" id="SSF102114">
    <property type="entry name" value="Radical SAM enzymes"/>
    <property type="match status" value="1"/>
</dbReference>
<dbReference type="PROSITE" id="PS51918">
    <property type="entry name" value="RADICAL_SAM"/>
    <property type="match status" value="1"/>
</dbReference>